<gene>
    <name type="primary">Tial1</name>
</gene>
<sequence length="392" mass="43389">MMEDDGQPRTLYVGNLSRDVTEVLILQLFSQIGPCKSCKMITEQPDSRRVNSSVGFSVLQHTSNDPYCFVEFYEHRDAAAALAAMNGRKILGKEVKVNWATTPSSQKKDTSNHFHVFVGDLSPEITTEDIKSAFAPFGKISDARVVKDMATGKSKGYGFVSFYNKLDAENAIVHMGGQWLGGRQIRTNWATRKPPAPKSTQETNTKQLRFEDVVNQSSPKNCTVYCGGIASGLTDQLMRQTFSPFGQIMEIRVFPEKGYSFVRFSTHESAAHAIVSVNGTTIEGHVVKCYWGKESPDMTKNFQQVDYSQWGQWSQVYGNPQQYGQYMANGWQVPPYGVYGQPWNQQGFGVDQSPSAAWMGGFGAQPPQGQAPPPVIPPPNQAGYGMASFPTQ</sequence>
<protein>
    <recommendedName>
        <fullName>Nucleolysin TIAR</fullName>
    </recommendedName>
    <alternativeName>
        <fullName>TIA-1-related protein</fullName>
    </alternativeName>
</protein>
<feature type="chain" id="PRO_0000081979" description="Nucleolysin TIAR">
    <location>
        <begin position="1"/>
        <end position="392"/>
    </location>
</feature>
<feature type="domain" description="RRM 1" evidence="3">
    <location>
        <begin position="9"/>
        <end position="102"/>
    </location>
</feature>
<feature type="domain" description="RRM 2" evidence="3">
    <location>
        <begin position="114"/>
        <end position="192"/>
    </location>
</feature>
<feature type="domain" description="RRM 3" evidence="3">
    <location>
        <begin position="222"/>
        <end position="294"/>
    </location>
</feature>
<feature type="region of interest" description="Disordered" evidence="4">
    <location>
        <begin position="363"/>
        <end position="392"/>
    </location>
</feature>
<feature type="compositionally biased region" description="Pro residues" evidence="4">
    <location>
        <begin position="369"/>
        <end position="380"/>
    </location>
</feature>
<feature type="modified residue" description="N6-acetyllysine" evidence="2">
    <location>
        <position position="139"/>
    </location>
</feature>
<feature type="modified residue" description="Phosphoserine" evidence="2">
    <location>
        <position position="218"/>
    </location>
</feature>
<feature type="mutagenesis site" description="Impairs nuclear localization." evidence="6">
    <original>FVGDL</original>
    <variation>DVPDD</variation>
    <location>
        <begin position="117"/>
        <end position="121"/>
    </location>
</feature>
<feature type="mutagenesis site" description="Impairs nuclear localization." evidence="6">
    <original>GYGFV</original>
    <variation>PDGDE</variation>
    <location>
        <begin position="156"/>
        <end position="160"/>
    </location>
</feature>
<feature type="mutagenesis site" description="Abolishes nuclear export." evidence="6">
    <original>YCGGI</original>
    <variation>DRPPD</variation>
    <location>
        <begin position="225"/>
        <end position="229"/>
    </location>
</feature>
<feature type="mutagenesis site" description="Abolishes nuclear export." evidence="6">
    <original>GYSFVRF</original>
    <variation>PDSDERD</variation>
    <location>
        <begin position="258"/>
        <end position="264"/>
    </location>
</feature>
<feature type="mutagenesis site" description="No effect on nuclear localization." evidence="6">
    <original>KESPDMTK</original>
    <variation>RESPDMTR</variation>
    <location>
        <begin position="293"/>
        <end position="300"/>
    </location>
</feature>
<reference key="1">
    <citation type="journal article" date="1996" name="Nucleic Acids Res.">
        <title>Structure, tissue distribution and genomic organization of the murine RRM-type RNA binding proteins TIA-1 and TIAR.</title>
        <authorList>
            <person name="Beck A.R.P."/>
            <person name="Medley O.G."/>
            <person name="O'Brien S."/>
            <person name="Anderson P."/>
            <person name="Streuli M."/>
        </authorList>
    </citation>
    <scope>NUCLEOTIDE SEQUENCE [MRNA]</scope>
</reference>
<reference key="2">
    <citation type="journal article" date="2001" name="J. Biol. Chem.">
        <title>TIA-1 and TIAR activate splicing of alternative exons with weak 5' splice sites followed by a U-rich stretch on their own pre-mRNAs.</title>
        <authorList>
            <person name="Le Guiner C."/>
            <person name="Lejeune F."/>
            <person name="Galiana D."/>
            <person name="Kister L."/>
            <person name="Breathnach R."/>
            <person name="Stevenin J."/>
            <person name="Del Gatto-Konczak F."/>
        </authorList>
    </citation>
    <scope>FUNCTION</scope>
</reference>
<reference key="3">
    <citation type="journal article" date="2005" name="J. Cell Sci.">
        <title>Identification of the sequence determinants mediating the nucleo-cytoplasmic shuttling of TIAR and TIA-1 RNA-binding proteins.</title>
        <authorList>
            <person name="Zhang T."/>
            <person name="Delestienne N."/>
            <person name="Huez G."/>
            <person name="Kruys V."/>
            <person name="Gueydan C."/>
        </authorList>
    </citation>
    <scope>SUBCELLULAR LOCATION</scope>
    <scope>DOMAIN</scope>
    <scope>MUTAGENESIS OF 117-PHE--ASP-121; 156-GLY--ASP-160; 225-TYR--ILE-229; 258-GLY--ASP-264 AND 293-LYS--LYS-300</scope>
</reference>
<reference key="4">
    <citation type="journal article" date="2007" name="J. Biol. Chem.">
        <title>Two isoforms of the T-cell intracellular antigen 1 (TIA-1) splicing factor display distinct splicing regulation activities. Control of TIA-1 isoform ratio by TIA-1-related protein.</title>
        <authorList>
            <person name="Izquierdo J.M."/>
            <person name="Valcarcel J."/>
        </authorList>
    </citation>
    <scope>FUNCTION</scope>
</reference>
<reference key="5">
    <citation type="journal article" date="2010" name="Cell">
        <title>A tissue-specific atlas of mouse protein phosphorylation and expression.</title>
        <authorList>
            <person name="Huttlin E.L."/>
            <person name="Jedrychowski M.P."/>
            <person name="Elias J.E."/>
            <person name="Goswami T."/>
            <person name="Rad R."/>
            <person name="Beausoleil S.A."/>
            <person name="Villen J."/>
            <person name="Haas W."/>
            <person name="Sowa M.E."/>
            <person name="Gygi S.P."/>
        </authorList>
    </citation>
    <scope>IDENTIFICATION BY MASS SPECTROMETRY [LARGE SCALE ANALYSIS]</scope>
    <source>
        <tissue>Brain</tissue>
        <tissue>Lung</tissue>
        <tissue>Spleen</tissue>
        <tissue>Testis</tissue>
    </source>
</reference>
<reference key="6">
    <citation type="journal article" date="2010" name="Reproduction">
        <title>Functional reconstruction of NANOS3 expression in the germ cell lineage by a novel transgenic reporter reveals distinct subcellular localizations of NANOS3.</title>
        <authorList>
            <person name="Yamaji M."/>
            <person name="Tanaka T."/>
            <person name="Shigeta M."/>
            <person name="Chuma S."/>
            <person name="Saga Y."/>
            <person name="Saitou M."/>
        </authorList>
    </citation>
    <scope>SUBCELLULAR LOCATION</scope>
    <scope>TISSUE SPECIFICITY</scope>
</reference>
<dbReference type="EMBL" id="U55861">
    <property type="protein sequence ID" value="AAC52870.1"/>
    <property type="molecule type" value="mRNA"/>
</dbReference>
<dbReference type="CCDS" id="CCDS21897.1"/>
<dbReference type="PIR" id="S72436">
    <property type="entry name" value="S72436"/>
</dbReference>
<dbReference type="RefSeq" id="NP_033409.1">
    <property type="nucleotide sequence ID" value="NM_009383.2"/>
</dbReference>
<dbReference type="SMR" id="P70318"/>
<dbReference type="BioGRID" id="204192">
    <property type="interactions" value="16"/>
</dbReference>
<dbReference type="FunCoup" id="P70318">
    <property type="interactions" value="4968"/>
</dbReference>
<dbReference type="IntAct" id="P70318">
    <property type="interactions" value="28"/>
</dbReference>
<dbReference type="MINT" id="P70318"/>
<dbReference type="STRING" id="10090.ENSMUSP00000101833"/>
<dbReference type="iPTMnet" id="P70318"/>
<dbReference type="PhosphoSitePlus" id="P70318"/>
<dbReference type="PaxDb" id="10090-ENSMUSP00000101833"/>
<dbReference type="PeptideAtlas" id="P70318"/>
<dbReference type="ProteomicsDB" id="262779"/>
<dbReference type="Pumba" id="P70318"/>
<dbReference type="Antibodypedia" id="18838">
    <property type="antibodies" value="159 antibodies from 29 providers"/>
</dbReference>
<dbReference type="DNASU" id="21843"/>
<dbReference type="Ensembl" id="ENSMUST00000106226.9">
    <property type="protein sequence ID" value="ENSMUSP00000101833.3"/>
    <property type="gene ID" value="ENSMUSG00000030846.17"/>
</dbReference>
<dbReference type="GeneID" id="21843"/>
<dbReference type="KEGG" id="mmu:21843"/>
<dbReference type="UCSC" id="uc009jyy.1">
    <property type="organism name" value="mouse"/>
</dbReference>
<dbReference type="AGR" id="MGI:107913"/>
<dbReference type="CTD" id="7073"/>
<dbReference type="MGI" id="MGI:107913">
    <property type="gene designation" value="Tial1"/>
</dbReference>
<dbReference type="VEuPathDB" id="HostDB:ENSMUSG00000030846"/>
<dbReference type="eggNOG" id="KOG0148">
    <property type="taxonomic scope" value="Eukaryota"/>
</dbReference>
<dbReference type="GeneTree" id="ENSGT00940000160482"/>
<dbReference type="InParanoid" id="P70318"/>
<dbReference type="OMA" id="NEIRVNW"/>
<dbReference type="OrthoDB" id="439808at2759"/>
<dbReference type="PhylomeDB" id="P70318"/>
<dbReference type="TreeFam" id="TF312915"/>
<dbReference type="BioGRID-ORCS" id="21843">
    <property type="hits" value="9 hits in 78 CRISPR screens"/>
</dbReference>
<dbReference type="CD-CODE" id="D12E4DB9">
    <property type="entry name" value="Stress granule"/>
</dbReference>
<dbReference type="ChiTaRS" id="Tial1">
    <property type="organism name" value="mouse"/>
</dbReference>
<dbReference type="PRO" id="PR:P70318"/>
<dbReference type="Proteomes" id="UP000000589">
    <property type="component" value="Chromosome 7"/>
</dbReference>
<dbReference type="RNAct" id="P70318">
    <property type="molecule type" value="protein"/>
</dbReference>
<dbReference type="Bgee" id="ENSMUSG00000030846">
    <property type="expression patterns" value="Expressed in ureter smooth muscle and 265 other cell types or tissues"/>
</dbReference>
<dbReference type="ExpressionAtlas" id="P70318">
    <property type="expression patterns" value="baseline and differential"/>
</dbReference>
<dbReference type="GO" id="GO:0044194">
    <property type="term" value="C:cytolytic granule"/>
    <property type="evidence" value="ECO:0007669"/>
    <property type="project" value="UniProtKB-SubCell"/>
</dbReference>
<dbReference type="GO" id="GO:0005737">
    <property type="term" value="C:cytoplasm"/>
    <property type="evidence" value="ECO:0000314"/>
    <property type="project" value="UniProtKB"/>
</dbReference>
<dbReference type="GO" id="GO:0010494">
    <property type="term" value="C:cytoplasmic stress granule"/>
    <property type="evidence" value="ECO:0000314"/>
    <property type="project" value="UniProtKB"/>
</dbReference>
<dbReference type="GO" id="GO:0005634">
    <property type="term" value="C:nucleus"/>
    <property type="evidence" value="ECO:0000314"/>
    <property type="project" value="UniProtKB"/>
</dbReference>
<dbReference type="GO" id="GO:0003677">
    <property type="term" value="F:DNA binding"/>
    <property type="evidence" value="ECO:0007669"/>
    <property type="project" value="InterPro"/>
</dbReference>
<dbReference type="GO" id="GO:0035925">
    <property type="term" value="F:mRNA 3'-UTR AU-rich region binding"/>
    <property type="evidence" value="ECO:0000314"/>
    <property type="project" value="MGI"/>
</dbReference>
<dbReference type="GO" id="GO:0006915">
    <property type="term" value="P:apoptotic process"/>
    <property type="evidence" value="ECO:0007669"/>
    <property type="project" value="UniProtKB-KW"/>
</dbReference>
<dbReference type="GO" id="GO:0007281">
    <property type="term" value="P:germ cell development"/>
    <property type="evidence" value="ECO:0000315"/>
    <property type="project" value="MGI"/>
</dbReference>
<dbReference type="GO" id="GO:2000648">
    <property type="term" value="P:positive regulation of stem cell proliferation"/>
    <property type="evidence" value="ECO:0000315"/>
    <property type="project" value="MGI"/>
</dbReference>
<dbReference type="GO" id="GO:0017145">
    <property type="term" value="P:stem cell division"/>
    <property type="evidence" value="ECO:0000315"/>
    <property type="project" value="MGI"/>
</dbReference>
<dbReference type="GO" id="GO:0072089">
    <property type="term" value="P:stem cell proliferation"/>
    <property type="evidence" value="ECO:0000315"/>
    <property type="project" value="MGI"/>
</dbReference>
<dbReference type="CDD" id="cd12616">
    <property type="entry name" value="RRM1_TIAR"/>
    <property type="match status" value="1"/>
</dbReference>
<dbReference type="CDD" id="cd12617">
    <property type="entry name" value="RRM2_TIAR"/>
    <property type="match status" value="1"/>
</dbReference>
<dbReference type="CDD" id="cd12620">
    <property type="entry name" value="RRM3_TIAR"/>
    <property type="match status" value="1"/>
</dbReference>
<dbReference type="FunFam" id="3.30.70.330:FF:000087">
    <property type="entry name" value="Nucleolysin TIAR isoform 1"/>
    <property type="match status" value="1"/>
</dbReference>
<dbReference type="FunFam" id="3.30.70.330:FF:000038">
    <property type="entry name" value="Nucleolysin tiar isoform 1"/>
    <property type="match status" value="1"/>
</dbReference>
<dbReference type="FunFam" id="3.30.70.330:FF:000045">
    <property type="entry name" value="Nucleolysin tiar isoform 1"/>
    <property type="match status" value="1"/>
</dbReference>
<dbReference type="Gene3D" id="3.30.70.330">
    <property type="match status" value="3"/>
</dbReference>
<dbReference type="InterPro" id="IPR012677">
    <property type="entry name" value="Nucleotide-bd_a/b_plait_sf"/>
</dbReference>
<dbReference type="InterPro" id="IPR035979">
    <property type="entry name" value="RBD_domain_sf"/>
</dbReference>
<dbReference type="InterPro" id="IPR000504">
    <property type="entry name" value="RRM_dom"/>
</dbReference>
<dbReference type="InterPro" id="IPR003954">
    <property type="entry name" value="RRM_dom_euk"/>
</dbReference>
<dbReference type="InterPro" id="IPR034492">
    <property type="entry name" value="TIAR_RRM1"/>
</dbReference>
<dbReference type="InterPro" id="IPR034494">
    <property type="entry name" value="TIAR_RRM2"/>
</dbReference>
<dbReference type="InterPro" id="IPR034496">
    <property type="entry name" value="TIAR_RRM3"/>
</dbReference>
<dbReference type="PANTHER" id="PTHR10352">
    <property type="entry name" value="EUKARYOTIC TRANSLATION INITIATION FACTOR 3 SUBUNIT G"/>
    <property type="match status" value="1"/>
</dbReference>
<dbReference type="Pfam" id="PF00076">
    <property type="entry name" value="RRM_1"/>
    <property type="match status" value="4"/>
</dbReference>
<dbReference type="SMART" id="SM00360">
    <property type="entry name" value="RRM"/>
    <property type="match status" value="3"/>
</dbReference>
<dbReference type="SMART" id="SM00361">
    <property type="entry name" value="RRM_1"/>
    <property type="match status" value="3"/>
</dbReference>
<dbReference type="SUPFAM" id="SSF54928">
    <property type="entry name" value="RNA-binding domain, RBD"/>
    <property type="match status" value="3"/>
</dbReference>
<dbReference type="PROSITE" id="PS50102">
    <property type="entry name" value="RRM"/>
    <property type="match status" value="3"/>
</dbReference>
<organism>
    <name type="scientific">Mus musculus</name>
    <name type="common">Mouse</name>
    <dbReference type="NCBI Taxonomy" id="10090"/>
    <lineage>
        <taxon>Eukaryota</taxon>
        <taxon>Metazoa</taxon>
        <taxon>Chordata</taxon>
        <taxon>Craniata</taxon>
        <taxon>Vertebrata</taxon>
        <taxon>Euteleostomi</taxon>
        <taxon>Mammalia</taxon>
        <taxon>Eutheria</taxon>
        <taxon>Euarchontoglires</taxon>
        <taxon>Glires</taxon>
        <taxon>Rodentia</taxon>
        <taxon>Myomorpha</taxon>
        <taxon>Muroidea</taxon>
        <taxon>Muridae</taxon>
        <taxon>Murinae</taxon>
        <taxon>Mus</taxon>
        <taxon>Mus</taxon>
    </lineage>
</organism>
<accession>P70318</accession>
<proteinExistence type="evidence at protein level"/>
<comment type="function">
    <text evidence="2 5 7">RNA-binding protein involved in alternative pre-RNA splicing and in cytoplasmic stress granules formation (By similarity). Shows a preference for uridine-rich RNAs (By similarity). Activates splicing of alternative exons with weak 5' splice sites followed by a U-rich stretch on its own pre-mRNA and on TIA1 mRNA (PubMed:11514562). Promotes the inclusion of TIA1 exon 5 to give rise to the long isoform (isoform a) of TIA1 (PubMed:17488725). Acts downstream of the stress-induced phosphorylation of EIF2S1/EIF2A to promote the recruitment of untranslated mRNAs to cytoplasmic stress granules (SG) (By similarity). Possesses nucleolytic activity against cytotoxic lymphocyte target cells (By similarity). May be involved in apoptosis (By similarity).</text>
</comment>
<comment type="subunit">
    <text evidence="2">Interacts with FASTK.</text>
</comment>
<comment type="interaction">
    <interactant intactId="EBI-299820">
        <id>P70318</id>
    </interactant>
    <interactant intactId="EBI-7977861">
        <id>Q8K2L4</id>
        <label>Ddx21</label>
    </interactant>
    <organismsDiffer>false</organismsDiffer>
    <experiments>2</experiments>
</comment>
<comment type="interaction">
    <interactant intactId="EBI-299820">
        <id>P70318</id>
    </interactant>
    <interactant intactId="EBI-4282050">
        <id>Q3THB3</id>
        <label>Hnrnpm</label>
    </interactant>
    <organismsDiffer>false</organismsDiffer>
    <experiments>2</experiments>
</comment>
<comment type="interaction">
    <interactant intactId="EBI-299820">
        <id>P70318</id>
    </interactant>
    <interactant intactId="EBI-2550360">
        <id>Q6PDM2</id>
        <label>Srsf1</label>
    </interactant>
    <organismsDiffer>false</organismsDiffer>
    <experiments>3</experiments>
</comment>
<comment type="subcellular location">
    <subcellularLocation>
        <location evidence="6 8">Nucleus</location>
    </subcellularLocation>
    <subcellularLocation>
        <location evidence="6 8">Cytoplasm</location>
    </subcellularLocation>
    <subcellularLocation>
        <location evidence="8">Cytoplasm</location>
        <location evidence="8">Stress granule</location>
    </subcellularLocation>
    <subcellularLocation>
        <location evidence="2">Cytolytic granule</location>
    </subcellularLocation>
    <text evidence="2 6">Nuclear import seems to be coupled to RNA polymerase II transcription and may be dependent on RNA-binding (PubMed:16278295). Accumulates in cytoplasmic stress granules (SG) following cellular damage (By similarity).</text>
</comment>
<comment type="tissue specificity">
    <text evidence="8">Expressed both in primordial germ cells (PGCs) and in neighboring somatic cells.</text>
</comment>
<comment type="domain">
    <text evidence="2">The RRM 2 domain is required for the binding to target RNA, and the RRM 1 and RRM 3 domains seem to contribute to the affinity of the interaction with RNA.</text>
</comment>
<comment type="domain">
    <text evidence="6">The RRM2 domain and the C-terminal residues 290-339 contribute to nuclear localization.</text>
</comment>
<comment type="domain">
    <text evidence="6">The RRM3 domain mediates nuclear export and cytoplasmic localization in a manner dependent on RNA- binding.</text>
</comment>
<comment type="PTM">
    <text evidence="1">Phosphorylated by MAPK14 following DNA damage, releasing TIAR from GADD45A mRNA.</text>
</comment>
<name>TIAR_MOUSE</name>
<keyword id="KW-0007">Acetylation</keyword>
<keyword id="KW-0053">Apoptosis</keyword>
<keyword id="KW-0963">Cytoplasm</keyword>
<keyword id="KW-0458">Lysosome</keyword>
<keyword id="KW-0539">Nucleus</keyword>
<keyword id="KW-0597">Phosphoprotein</keyword>
<keyword id="KW-1185">Reference proteome</keyword>
<keyword id="KW-0677">Repeat</keyword>
<keyword id="KW-0694">RNA-binding</keyword>
<evidence type="ECO:0000250" key="1"/>
<evidence type="ECO:0000250" key="2">
    <source>
        <dbReference type="UniProtKB" id="Q01085"/>
    </source>
</evidence>
<evidence type="ECO:0000255" key="3">
    <source>
        <dbReference type="PROSITE-ProRule" id="PRU00176"/>
    </source>
</evidence>
<evidence type="ECO:0000256" key="4">
    <source>
        <dbReference type="SAM" id="MobiDB-lite"/>
    </source>
</evidence>
<evidence type="ECO:0000269" key="5">
    <source>
    </source>
</evidence>
<evidence type="ECO:0000269" key="6">
    <source>
    </source>
</evidence>
<evidence type="ECO:0000269" key="7">
    <source>
    </source>
</evidence>
<evidence type="ECO:0000269" key="8">
    <source>
    </source>
</evidence>